<dbReference type="EC" id="6.1.1.11" evidence="1"/>
<dbReference type="EMBL" id="BA000045">
    <property type="protein sequence ID" value="BAC88657.1"/>
    <property type="molecule type" value="Genomic_DNA"/>
</dbReference>
<dbReference type="RefSeq" id="NP_923662.1">
    <property type="nucleotide sequence ID" value="NC_005125.1"/>
</dbReference>
<dbReference type="RefSeq" id="WP_011140718.1">
    <property type="nucleotide sequence ID" value="NC_005125.1"/>
</dbReference>
<dbReference type="SMR" id="Q7NMP9"/>
<dbReference type="FunCoup" id="Q7NMP9">
    <property type="interactions" value="380"/>
</dbReference>
<dbReference type="STRING" id="251221.gene:10758192"/>
<dbReference type="EnsemblBacteria" id="BAC88657">
    <property type="protein sequence ID" value="BAC88657"/>
    <property type="gene ID" value="BAC88657"/>
</dbReference>
<dbReference type="KEGG" id="gvi:glr0716"/>
<dbReference type="PATRIC" id="fig|251221.4.peg.728"/>
<dbReference type="eggNOG" id="COG0172">
    <property type="taxonomic scope" value="Bacteria"/>
</dbReference>
<dbReference type="HOGENOM" id="CLU_023797_1_1_3"/>
<dbReference type="InParanoid" id="Q7NMP9"/>
<dbReference type="OrthoDB" id="9804647at2"/>
<dbReference type="PhylomeDB" id="Q7NMP9"/>
<dbReference type="UniPathway" id="UPA00906">
    <property type="reaction ID" value="UER00895"/>
</dbReference>
<dbReference type="Proteomes" id="UP000000557">
    <property type="component" value="Chromosome"/>
</dbReference>
<dbReference type="GO" id="GO:0005737">
    <property type="term" value="C:cytoplasm"/>
    <property type="evidence" value="ECO:0007669"/>
    <property type="project" value="UniProtKB-SubCell"/>
</dbReference>
<dbReference type="GO" id="GO:0005524">
    <property type="term" value="F:ATP binding"/>
    <property type="evidence" value="ECO:0007669"/>
    <property type="project" value="UniProtKB-UniRule"/>
</dbReference>
<dbReference type="GO" id="GO:0004828">
    <property type="term" value="F:serine-tRNA ligase activity"/>
    <property type="evidence" value="ECO:0007669"/>
    <property type="project" value="UniProtKB-UniRule"/>
</dbReference>
<dbReference type="GO" id="GO:0016260">
    <property type="term" value="P:selenocysteine biosynthetic process"/>
    <property type="evidence" value="ECO:0007669"/>
    <property type="project" value="UniProtKB-UniRule"/>
</dbReference>
<dbReference type="GO" id="GO:0006434">
    <property type="term" value="P:seryl-tRNA aminoacylation"/>
    <property type="evidence" value="ECO:0007669"/>
    <property type="project" value="UniProtKB-UniRule"/>
</dbReference>
<dbReference type="CDD" id="cd00770">
    <property type="entry name" value="SerRS_core"/>
    <property type="match status" value="1"/>
</dbReference>
<dbReference type="Gene3D" id="3.30.930.10">
    <property type="entry name" value="Bira Bifunctional Protein, Domain 2"/>
    <property type="match status" value="1"/>
</dbReference>
<dbReference type="Gene3D" id="1.10.287.40">
    <property type="entry name" value="Serine-tRNA synthetase, tRNA binding domain"/>
    <property type="match status" value="1"/>
</dbReference>
<dbReference type="HAMAP" id="MF_00176">
    <property type="entry name" value="Ser_tRNA_synth_type1"/>
    <property type="match status" value="1"/>
</dbReference>
<dbReference type="InterPro" id="IPR002314">
    <property type="entry name" value="aa-tRNA-synt_IIb"/>
</dbReference>
<dbReference type="InterPro" id="IPR006195">
    <property type="entry name" value="aa-tRNA-synth_II"/>
</dbReference>
<dbReference type="InterPro" id="IPR045864">
    <property type="entry name" value="aa-tRNA-synth_II/BPL/LPL"/>
</dbReference>
<dbReference type="InterPro" id="IPR002317">
    <property type="entry name" value="Ser-tRNA-ligase_type_1"/>
</dbReference>
<dbReference type="InterPro" id="IPR015866">
    <property type="entry name" value="Ser-tRNA-synth_1_N"/>
</dbReference>
<dbReference type="InterPro" id="IPR042103">
    <property type="entry name" value="SerRS_1_N_sf"/>
</dbReference>
<dbReference type="InterPro" id="IPR033729">
    <property type="entry name" value="SerRS_core"/>
</dbReference>
<dbReference type="InterPro" id="IPR010978">
    <property type="entry name" value="tRNA-bd_arm"/>
</dbReference>
<dbReference type="NCBIfam" id="TIGR00414">
    <property type="entry name" value="serS"/>
    <property type="match status" value="1"/>
</dbReference>
<dbReference type="PANTHER" id="PTHR43697:SF1">
    <property type="entry name" value="SERINE--TRNA LIGASE"/>
    <property type="match status" value="1"/>
</dbReference>
<dbReference type="PANTHER" id="PTHR43697">
    <property type="entry name" value="SERYL-TRNA SYNTHETASE"/>
    <property type="match status" value="1"/>
</dbReference>
<dbReference type="Pfam" id="PF02403">
    <property type="entry name" value="Seryl_tRNA_N"/>
    <property type="match status" value="1"/>
</dbReference>
<dbReference type="Pfam" id="PF00587">
    <property type="entry name" value="tRNA-synt_2b"/>
    <property type="match status" value="1"/>
</dbReference>
<dbReference type="PIRSF" id="PIRSF001529">
    <property type="entry name" value="Ser-tRNA-synth_IIa"/>
    <property type="match status" value="1"/>
</dbReference>
<dbReference type="PRINTS" id="PR00981">
    <property type="entry name" value="TRNASYNTHSER"/>
</dbReference>
<dbReference type="SUPFAM" id="SSF55681">
    <property type="entry name" value="Class II aaRS and biotin synthetases"/>
    <property type="match status" value="1"/>
</dbReference>
<dbReference type="SUPFAM" id="SSF46589">
    <property type="entry name" value="tRNA-binding arm"/>
    <property type="match status" value="1"/>
</dbReference>
<dbReference type="PROSITE" id="PS50862">
    <property type="entry name" value="AA_TRNA_LIGASE_II"/>
    <property type="match status" value="1"/>
</dbReference>
<reference key="1">
    <citation type="journal article" date="2003" name="DNA Res.">
        <title>Complete genome structure of Gloeobacter violaceus PCC 7421, a cyanobacterium that lacks thylakoids.</title>
        <authorList>
            <person name="Nakamura Y."/>
            <person name="Kaneko T."/>
            <person name="Sato S."/>
            <person name="Mimuro M."/>
            <person name="Miyashita H."/>
            <person name="Tsuchiya T."/>
            <person name="Sasamoto S."/>
            <person name="Watanabe A."/>
            <person name="Kawashima K."/>
            <person name="Kishida Y."/>
            <person name="Kiyokawa C."/>
            <person name="Kohara M."/>
            <person name="Matsumoto M."/>
            <person name="Matsuno A."/>
            <person name="Nakazaki N."/>
            <person name="Shimpo S."/>
            <person name="Takeuchi C."/>
            <person name="Yamada M."/>
            <person name="Tabata S."/>
        </authorList>
    </citation>
    <scope>NUCLEOTIDE SEQUENCE [LARGE SCALE GENOMIC DNA]</scope>
    <source>
        <strain>ATCC 29082 / PCC 7421</strain>
    </source>
</reference>
<organism>
    <name type="scientific">Gloeobacter violaceus (strain ATCC 29082 / PCC 7421)</name>
    <dbReference type="NCBI Taxonomy" id="251221"/>
    <lineage>
        <taxon>Bacteria</taxon>
        <taxon>Bacillati</taxon>
        <taxon>Cyanobacteriota</taxon>
        <taxon>Cyanophyceae</taxon>
        <taxon>Gloeobacterales</taxon>
        <taxon>Gloeobacteraceae</taxon>
        <taxon>Gloeobacter</taxon>
    </lineage>
</organism>
<keyword id="KW-0030">Aminoacyl-tRNA synthetase</keyword>
<keyword id="KW-0067">ATP-binding</keyword>
<keyword id="KW-0963">Cytoplasm</keyword>
<keyword id="KW-0436">Ligase</keyword>
<keyword id="KW-0547">Nucleotide-binding</keyword>
<keyword id="KW-0648">Protein biosynthesis</keyword>
<keyword id="KW-1185">Reference proteome</keyword>
<name>SYS_GLOVI</name>
<proteinExistence type="inferred from homology"/>
<accession>Q7NMP9</accession>
<evidence type="ECO:0000255" key="1">
    <source>
        <dbReference type="HAMAP-Rule" id="MF_00176"/>
    </source>
</evidence>
<protein>
    <recommendedName>
        <fullName evidence="1">Serine--tRNA ligase</fullName>
        <ecNumber evidence="1">6.1.1.11</ecNumber>
    </recommendedName>
    <alternativeName>
        <fullName evidence="1">Seryl-tRNA synthetase</fullName>
        <shortName evidence="1">SerRS</shortName>
    </alternativeName>
    <alternativeName>
        <fullName evidence="1">Seryl-tRNA(Ser/Sec) synthetase</fullName>
    </alternativeName>
</protein>
<sequence length="429" mass="48687">MLDPKLLRDDPAKLIERLNTRGGDFTEVIEQLVALDSQRRASQTAFNRAQAEGNQIGKQVGERLRRGTAVGDPEVLALKQRGIDLKATLALLQDQERELAERFAALLPTLPNVPRPEVPIGKDENDNREMRFWGTPPIFDFEPAAHWDLGERLGLMNFARATLVAQARFVTLMGDGALLERALIAFMLDRHRAHGYIEILPPYLVNTASMTGTGQLPKFAEDSFRCRDDDLWLIPTAEVPVTNLYRDEILTDMQLPIHHCAFTPCFRREAGSYGRDTRGLIRLHQFHKVELVKFCRPEHSPTEHEKLVADAEDVLQQLELPYRVIELCTGDLGFGAARCFDLEVWLPSQNRYREISSCSNFEDFQARRANLRFKAPDKKGTEFVHTLNGSGLAVGRTFAAILENYQNRDGTVRVPEALKPYVRRDVLSR</sequence>
<comment type="function">
    <text evidence="1">Catalyzes the attachment of serine to tRNA(Ser). Is also able to aminoacylate tRNA(Sec) with serine, to form the misacylated tRNA L-seryl-tRNA(Sec), which will be further converted into selenocysteinyl-tRNA(Sec).</text>
</comment>
<comment type="catalytic activity">
    <reaction evidence="1">
        <text>tRNA(Ser) + L-serine + ATP = L-seryl-tRNA(Ser) + AMP + diphosphate + H(+)</text>
        <dbReference type="Rhea" id="RHEA:12292"/>
        <dbReference type="Rhea" id="RHEA-COMP:9669"/>
        <dbReference type="Rhea" id="RHEA-COMP:9703"/>
        <dbReference type="ChEBI" id="CHEBI:15378"/>
        <dbReference type="ChEBI" id="CHEBI:30616"/>
        <dbReference type="ChEBI" id="CHEBI:33019"/>
        <dbReference type="ChEBI" id="CHEBI:33384"/>
        <dbReference type="ChEBI" id="CHEBI:78442"/>
        <dbReference type="ChEBI" id="CHEBI:78533"/>
        <dbReference type="ChEBI" id="CHEBI:456215"/>
        <dbReference type="EC" id="6.1.1.11"/>
    </reaction>
</comment>
<comment type="catalytic activity">
    <reaction evidence="1">
        <text>tRNA(Sec) + L-serine + ATP = L-seryl-tRNA(Sec) + AMP + diphosphate + H(+)</text>
        <dbReference type="Rhea" id="RHEA:42580"/>
        <dbReference type="Rhea" id="RHEA-COMP:9742"/>
        <dbReference type="Rhea" id="RHEA-COMP:10128"/>
        <dbReference type="ChEBI" id="CHEBI:15378"/>
        <dbReference type="ChEBI" id="CHEBI:30616"/>
        <dbReference type="ChEBI" id="CHEBI:33019"/>
        <dbReference type="ChEBI" id="CHEBI:33384"/>
        <dbReference type="ChEBI" id="CHEBI:78442"/>
        <dbReference type="ChEBI" id="CHEBI:78533"/>
        <dbReference type="ChEBI" id="CHEBI:456215"/>
        <dbReference type="EC" id="6.1.1.11"/>
    </reaction>
</comment>
<comment type="pathway">
    <text evidence="1">Aminoacyl-tRNA biosynthesis; selenocysteinyl-tRNA(Sec) biosynthesis; L-seryl-tRNA(Sec) from L-serine and tRNA(Sec): step 1/1.</text>
</comment>
<comment type="subunit">
    <text evidence="1">Homodimer. The tRNA molecule binds across the dimer.</text>
</comment>
<comment type="subcellular location">
    <subcellularLocation>
        <location evidence="1">Cytoplasm</location>
    </subcellularLocation>
</comment>
<comment type="domain">
    <text evidence="1">Consists of two distinct domains, a catalytic core and a N-terminal extension that is involved in tRNA binding.</text>
</comment>
<comment type="similarity">
    <text evidence="1">Belongs to the class-II aminoacyl-tRNA synthetase family. Type-1 seryl-tRNA synthetase subfamily.</text>
</comment>
<feature type="chain" id="PRO_0000122054" description="Serine--tRNA ligase">
    <location>
        <begin position="1"/>
        <end position="429"/>
    </location>
</feature>
<feature type="binding site" evidence="1">
    <location>
        <begin position="236"/>
        <end position="238"/>
    </location>
    <ligand>
        <name>L-serine</name>
        <dbReference type="ChEBI" id="CHEBI:33384"/>
    </ligand>
</feature>
<feature type="binding site" evidence="1">
    <location>
        <begin position="267"/>
        <end position="269"/>
    </location>
    <ligand>
        <name>ATP</name>
        <dbReference type="ChEBI" id="CHEBI:30616"/>
    </ligand>
</feature>
<feature type="binding site" evidence="1">
    <location>
        <position position="290"/>
    </location>
    <ligand>
        <name>L-serine</name>
        <dbReference type="ChEBI" id="CHEBI:33384"/>
    </ligand>
</feature>
<feature type="binding site" evidence="1">
    <location>
        <begin position="354"/>
        <end position="357"/>
    </location>
    <ligand>
        <name>ATP</name>
        <dbReference type="ChEBI" id="CHEBI:30616"/>
    </ligand>
</feature>
<feature type="binding site" evidence="1">
    <location>
        <position position="390"/>
    </location>
    <ligand>
        <name>L-serine</name>
        <dbReference type="ChEBI" id="CHEBI:33384"/>
    </ligand>
</feature>
<gene>
    <name evidence="1" type="primary">serS</name>
    <name type="ordered locus">glr0716</name>
</gene>